<dbReference type="EC" id="2.1.3.3" evidence="2"/>
<dbReference type="EMBL" id="CP000259">
    <property type="protein sequence ID" value="ABF32454.1"/>
    <property type="molecule type" value="Genomic_DNA"/>
</dbReference>
<dbReference type="SMR" id="Q1JKW5"/>
<dbReference type="KEGG" id="spk:MGAS9429_Spy1267"/>
<dbReference type="HOGENOM" id="CLU_043846_3_1_9"/>
<dbReference type="UniPathway" id="UPA00254">
    <property type="reaction ID" value="UER00365"/>
</dbReference>
<dbReference type="Proteomes" id="UP000002433">
    <property type="component" value="Chromosome"/>
</dbReference>
<dbReference type="GO" id="GO:0005737">
    <property type="term" value="C:cytoplasm"/>
    <property type="evidence" value="ECO:0007669"/>
    <property type="project" value="UniProtKB-SubCell"/>
</dbReference>
<dbReference type="GO" id="GO:0016597">
    <property type="term" value="F:amino acid binding"/>
    <property type="evidence" value="ECO:0007669"/>
    <property type="project" value="InterPro"/>
</dbReference>
<dbReference type="GO" id="GO:0004585">
    <property type="term" value="F:ornithine carbamoyltransferase activity"/>
    <property type="evidence" value="ECO:0007669"/>
    <property type="project" value="UniProtKB-UniRule"/>
</dbReference>
<dbReference type="GO" id="GO:0042450">
    <property type="term" value="P:arginine biosynthetic process via ornithine"/>
    <property type="evidence" value="ECO:0007669"/>
    <property type="project" value="TreeGrafter"/>
</dbReference>
<dbReference type="GO" id="GO:0019547">
    <property type="term" value="P:arginine catabolic process to ornithine"/>
    <property type="evidence" value="ECO:0007669"/>
    <property type="project" value="UniProtKB-UniRule"/>
</dbReference>
<dbReference type="GO" id="GO:0019240">
    <property type="term" value="P:citrulline biosynthetic process"/>
    <property type="evidence" value="ECO:0007669"/>
    <property type="project" value="TreeGrafter"/>
</dbReference>
<dbReference type="FunFam" id="3.40.50.1370:FF:000004">
    <property type="entry name" value="Ornithine carbamoyltransferase"/>
    <property type="match status" value="1"/>
</dbReference>
<dbReference type="Gene3D" id="3.40.50.1370">
    <property type="entry name" value="Aspartate/ornithine carbamoyltransferase"/>
    <property type="match status" value="2"/>
</dbReference>
<dbReference type="HAMAP" id="MF_01109">
    <property type="entry name" value="OTCase"/>
    <property type="match status" value="1"/>
</dbReference>
<dbReference type="InterPro" id="IPR006132">
    <property type="entry name" value="Asp/Orn_carbamoyltranf_P-bd"/>
</dbReference>
<dbReference type="InterPro" id="IPR006130">
    <property type="entry name" value="Asp/Orn_carbamoylTrfase"/>
</dbReference>
<dbReference type="InterPro" id="IPR036901">
    <property type="entry name" value="Asp/Orn_carbamoylTrfase_sf"/>
</dbReference>
<dbReference type="InterPro" id="IPR006131">
    <property type="entry name" value="Asp_carbamoyltransf_Asp/Orn-bd"/>
</dbReference>
<dbReference type="InterPro" id="IPR002292">
    <property type="entry name" value="Orn/put_carbamltrans"/>
</dbReference>
<dbReference type="InterPro" id="IPR024904">
    <property type="entry name" value="OTCase_ArgI"/>
</dbReference>
<dbReference type="NCBIfam" id="TIGR00658">
    <property type="entry name" value="orni_carb_tr"/>
    <property type="match status" value="1"/>
</dbReference>
<dbReference type="NCBIfam" id="NF001986">
    <property type="entry name" value="PRK00779.1"/>
    <property type="match status" value="1"/>
</dbReference>
<dbReference type="PANTHER" id="PTHR45753:SF1">
    <property type="entry name" value="ORNITHINE CARBAMOYLTRANSFERASE, CATABOLIC"/>
    <property type="match status" value="1"/>
</dbReference>
<dbReference type="PANTHER" id="PTHR45753">
    <property type="entry name" value="ORNITHINE CARBAMOYLTRANSFERASE, MITOCHONDRIAL"/>
    <property type="match status" value="1"/>
</dbReference>
<dbReference type="Pfam" id="PF00185">
    <property type="entry name" value="OTCace"/>
    <property type="match status" value="1"/>
</dbReference>
<dbReference type="Pfam" id="PF02729">
    <property type="entry name" value="OTCace_N"/>
    <property type="match status" value="1"/>
</dbReference>
<dbReference type="PRINTS" id="PR00100">
    <property type="entry name" value="AOTCASE"/>
</dbReference>
<dbReference type="PRINTS" id="PR00102">
    <property type="entry name" value="OTCASE"/>
</dbReference>
<dbReference type="SUPFAM" id="SSF53671">
    <property type="entry name" value="Aspartate/ornithine carbamoyltransferase"/>
    <property type="match status" value="1"/>
</dbReference>
<dbReference type="PROSITE" id="PS00097">
    <property type="entry name" value="CARBAMOYLTRANSFERASE"/>
    <property type="match status" value="1"/>
</dbReference>
<evidence type="ECO:0000250" key="1"/>
<evidence type="ECO:0000255" key="2">
    <source>
        <dbReference type="HAMAP-Rule" id="MF_01109"/>
    </source>
</evidence>
<gene>
    <name evidence="2" type="primary">arcB</name>
    <name type="ordered locus">MGAS9429_Spy1267</name>
</gene>
<keyword id="KW-0056">Arginine metabolism</keyword>
<keyword id="KW-0963">Cytoplasm</keyword>
<keyword id="KW-0808">Transferase</keyword>
<name>OTC_STRPC</name>
<organism>
    <name type="scientific">Streptococcus pyogenes serotype M12 (strain MGAS9429)</name>
    <dbReference type="NCBI Taxonomy" id="370551"/>
    <lineage>
        <taxon>Bacteria</taxon>
        <taxon>Bacillati</taxon>
        <taxon>Bacillota</taxon>
        <taxon>Bacilli</taxon>
        <taxon>Lactobacillales</taxon>
        <taxon>Streptococcaceae</taxon>
        <taxon>Streptococcus</taxon>
    </lineage>
</organism>
<proteinExistence type="inferred from homology"/>
<protein>
    <recommendedName>
        <fullName evidence="2">Ornithine carbamoyltransferase</fullName>
        <shortName evidence="2">OTCase</shortName>
        <ecNumber evidence="2">2.1.3.3</ecNumber>
    </recommendedName>
</protein>
<comment type="function">
    <text evidence="1">Reversibly catalyzes the transfer of the carbamoyl group from carbamoyl phosphate (CP) to the N(epsilon) atom of ornithine (ORN) to produce L-citrulline.</text>
</comment>
<comment type="catalytic activity">
    <reaction evidence="2">
        <text>carbamoyl phosphate + L-ornithine = L-citrulline + phosphate + H(+)</text>
        <dbReference type="Rhea" id="RHEA:19513"/>
        <dbReference type="ChEBI" id="CHEBI:15378"/>
        <dbReference type="ChEBI" id="CHEBI:43474"/>
        <dbReference type="ChEBI" id="CHEBI:46911"/>
        <dbReference type="ChEBI" id="CHEBI:57743"/>
        <dbReference type="ChEBI" id="CHEBI:58228"/>
        <dbReference type="EC" id="2.1.3.3"/>
    </reaction>
</comment>
<comment type="pathway">
    <text evidence="2">Amino-acid degradation; L-arginine degradation via ADI pathway; carbamoyl phosphate from L-arginine: step 2/2.</text>
</comment>
<comment type="subcellular location">
    <subcellularLocation>
        <location evidence="2">Cytoplasm</location>
    </subcellularLocation>
</comment>
<comment type="similarity">
    <text evidence="2">Belongs to the aspartate/ornithine carbamoyltransferase superfamily. OTCase family.</text>
</comment>
<reference key="1">
    <citation type="journal article" date="2006" name="Proc. Natl. Acad. Sci. U.S.A.">
        <title>Molecular genetic anatomy of inter- and intraserotype variation in the human bacterial pathogen group A Streptococcus.</title>
        <authorList>
            <person name="Beres S.B."/>
            <person name="Richter E.W."/>
            <person name="Nagiec M.J."/>
            <person name="Sumby P."/>
            <person name="Porcella S.F."/>
            <person name="DeLeo F.R."/>
            <person name="Musser J.M."/>
        </authorList>
    </citation>
    <scope>NUCLEOTIDE SEQUENCE [LARGE SCALE GENOMIC DNA]</scope>
    <source>
        <strain>MGAS9429</strain>
    </source>
</reference>
<feature type="chain" id="PRO_1000065124" description="Ornithine carbamoyltransferase">
    <location>
        <begin position="1"/>
        <end position="337"/>
    </location>
</feature>
<feature type="binding site" evidence="2">
    <location>
        <begin position="57"/>
        <end position="60"/>
    </location>
    <ligand>
        <name>carbamoyl phosphate</name>
        <dbReference type="ChEBI" id="CHEBI:58228"/>
    </ligand>
</feature>
<feature type="binding site" evidence="2">
    <location>
        <position position="84"/>
    </location>
    <ligand>
        <name>carbamoyl phosphate</name>
        <dbReference type="ChEBI" id="CHEBI:58228"/>
    </ligand>
</feature>
<feature type="binding site" evidence="2">
    <location>
        <position position="108"/>
    </location>
    <ligand>
        <name>carbamoyl phosphate</name>
        <dbReference type="ChEBI" id="CHEBI:58228"/>
    </ligand>
</feature>
<feature type="binding site" evidence="2">
    <location>
        <begin position="135"/>
        <end position="138"/>
    </location>
    <ligand>
        <name>carbamoyl phosphate</name>
        <dbReference type="ChEBI" id="CHEBI:58228"/>
    </ligand>
</feature>
<feature type="binding site" evidence="2">
    <location>
        <position position="167"/>
    </location>
    <ligand>
        <name>L-ornithine</name>
        <dbReference type="ChEBI" id="CHEBI:46911"/>
    </ligand>
</feature>
<feature type="binding site" evidence="2">
    <location>
        <position position="231"/>
    </location>
    <ligand>
        <name>L-ornithine</name>
        <dbReference type="ChEBI" id="CHEBI:46911"/>
    </ligand>
</feature>
<feature type="binding site" evidence="2">
    <location>
        <begin position="235"/>
        <end position="236"/>
    </location>
    <ligand>
        <name>L-ornithine</name>
        <dbReference type="ChEBI" id="CHEBI:46911"/>
    </ligand>
</feature>
<feature type="binding site" evidence="2">
    <location>
        <begin position="272"/>
        <end position="273"/>
    </location>
    <ligand>
        <name>carbamoyl phosphate</name>
        <dbReference type="ChEBI" id="CHEBI:58228"/>
    </ligand>
</feature>
<feature type="binding site" evidence="2">
    <location>
        <position position="317"/>
    </location>
    <ligand>
        <name>carbamoyl phosphate</name>
        <dbReference type="ChEBI" id="CHEBI:58228"/>
    </ligand>
</feature>
<accession>Q1JKW5</accession>
<sequence length="337" mass="37897">MTQVFQGRSFLAEKDFTRAELEYLIDFSAHLKDLKKRGVPHHYLEGKNIALLFEKTSTRTRAAFTTAAIDLGAHPEYLGANDIQLGKKESTEDTAKVLGRMFDGIEFRGFSQRMVEELAEFSGVPVWNGLTDEWHPTQMLADYLTVKENFGKLEGLTLVYCGDGRNNVANSLLVTGAILGVNVHIFSPKELFPEEEIVTLAEGYAKESGARILITEDADEAVKGADVLYTDVWVSMGEEDKFKERVELLQPYQVNMDLVQKAGNDKLIFLHCLPAFHDTNTVYGKDVAEKFGVKEMEVTDEVFRSKYARHFDQAENRMHTIKAVMAATLGNLFIPKV</sequence>